<name>HEM3_METKA</name>
<sequence length="298" mass="33053">MSETIRVATRSSRLAIIQTREVIELLERESPRDVEVEIVKTKSRGDVVRDRPLHKLGEKGVFVKEVDRLVLEGKADIAVHSAKDVPSVVDYPVDVAAVPPRRDPRECLVSRHGGLKELPRGATVGTSSPRRRAQILLERPDLKVEPMRGNVDTRVSKVRRREYDAAVLAKVGLDRLGMTSEVSEVYDPEEFVPPAGQGALMITCRKDDDRVKRLLEVVDDEKSRVEVETEKAVVRELGVGCSEPVGVHVRARDGDHVRLVLGLFEEDGSCGHVLKMRGSPEDVVREAVSQAREVLSDG</sequence>
<organism>
    <name type="scientific">Methanopyrus kandleri (strain AV19 / DSM 6324 / JCM 9639 / NBRC 100938)</name>
    <dbReference type="NCBI Taxonomy" id="190192"/>
    <lineage>
        <taxon>Archaea</taxon>
        <taxon>Methanobacteriati</taxon>
        <taxon>Methanobacteriota</taxon>
        <taxon>Methanomada group</taxon>
        <taxon>Methanopyri</taxon>
        <taxon>Methanopyrales</taxon>
        <taxon>Methanopyraceae</taxon>
        <taxon>Methanopyrus</taxon>
    </lineage>
</organism>
<evidence type="ECO:0000255" key="1">
    <source>
        <dbReference type="HAMAP-Rule" id="MF_00260"/>
    </source>
</evidence>
<evidence type="ECO:0000305" key="2"/>
<dbReference type="EC" id="2.5.1.61" evidence="1"/>
<dbReference type="EMBL" id="AE009439">
    <property type="protein sequence ID" value="AAM01960.1"/>
    <property type="status" value="ALT_INIT"/>
    <property type="molecule type" value="Genomic_DNA"/>
</dbReference>
<dbReference type="RefSeq" id="WP_158295922.1">
    <property type="nucleotide sequence ID" value="NC_003551.1"/>
</dbReference>
<dbReference type="SMR" id="Q8TXC8"/>
<dbReference type="FunCoup" id="Q8TXC8">
    <property type="interactions" value="225"/>
</dbReference>
<dbReference type="STRING" id="190192.MK0746"/>
<dbReference type="PaxDb" id="190192-MK0746"/>
<dbReference type="EnsemblBacteria" id="AAM01960">
    <property type="protein sequence ID" value="AAM01960"/>
    <property type="gene ID" value="MK0746"/>
</dbReference>
<dbReference type="GeneID" id="1476847"/>
<dbReference type="KEGG" id="mka:MK0746"/>
<dbReference type="PATRIC" id="fig|190192.8.peg.786"/>
<dbReference type="HOGENOM" id="CLU_019704_1_0_2"/>
<dbReference type="InParanoid" id="Q8TXC8"/>
<dbReference type="OrthoDB" id="8042at2157"/>
<dbReference type="UniPathway" id="UPA00251">
    <property type="reaction ID" value="UER00319"/>
</dbReference>
<dbReference type="Proteomes" id="UP000001826">
    <property type="component" value="Chromosome"/>
</dbReference>
<dbReference type="GO" id="GO:0005737">
    <property type="term" value="C:cytoplasm"/>
    <property type="evidence" value="ECO:0007669"/>
    <property type="project" value="TreeGrafter"/>
</dbReference>
<dbReference type="GO" id="GO:0004418">
    <property type="term" value="F:hydroxymethylbilane synthase activity"/>
    <property type="evidence" value="ECO:0007669"/>
    <property type="project" value="UniProtKB-UniRule"/>
</dbReference>
<dbReference type="GO" id="GO:0006782">
    <property type="term" value="P:protoporphyrinogen IX biosynthetic process"/>
    <property type="evidence" value="ECO:0007669"/>
    <property type="project" value="UniProtKB-UniRule"/>
</dbReference>
<dbReference type="CDD" id="cd13644">
    <property type="entry name" value="PBP2_HemC_archaea"/>
    <property type="match status" value="1"/>
</dbReference>
<dbReference type="FunFam" id="3.40.190.10:FF:000005">
    <property type="entry name" value="Porphobilinogen deaminase"/>
    <property type="match status" value="1"/>
</dbReference>
<dbReference type="Gene3D" id="3.40.190.10">
    <property type="entry name" value="Periplasmic binding protein-like II"/>
    <property type="match status" value="2"/>
</dbReference>
<dbReference type="Gene3D" id="3.30.160.40">
    <property type="entry name" value="Porphobilinogen deaminase, C-terminal domain"/>
    <property type="match status" value="1"/>
</dbReference>
<dbReference type="HAMAP" id="MF_00260">
    <property type="entry name" value="Porphobil_deam"/>
    <property type="match status" value="1"/>
</dbReference>
<dbReference type="InterPro" id="IPR000860">
    <property type="entry name" value="HemC"/>
</dbReference>
<dbReference type="InterPro" id="IPR022417">
    <property type="entry name" value="Porphobilin_deaminase_N"/>
</dbReference>
<dbReference type="InterPro" id="IPR022418">
    <property type="entry name" value="Porphobilinogen_deaminase_C"/>
</dbReference>
<dbReference type="InterPro" id="IPR036803">
    <property type="entry name" value="Porphobilinogen_deaminase_C_sf"/>
</dbReference>
<dbReference type="NCBIfam" id="TIGR00212">
    <property type="entry name" value="hemC"/>
    <property type="match status" value="1"/>
</dbReference>
<dbReference type="PANTHER" id="PTHR11557">
    <property type="entry name" value="PORPHOBILINOGEN DEAMINASE"/>
    <property type="match status" value="1"/>
</dbReference>
<dbReference type="PANTHER" id="PTHR11557:SF0">
    <property type="entry name" value="PORPHOBILINOGEN DEAMINASE"/>
    <property type="match status" value="1"/>
</dbReference>
<dbReference type="Pfam" id="PF01379">
    <property type="entry name" value="Porphobil_deam"/>
    <property type="match status" value="1"/>
</dbReference>
<dbReference type="Pfam" id="PF03900">
    <property type="entry name" value="Porphobil_deamC"/>
    <property type="match status" value="1"/>
</dbReference>
<dbReference type="PIRSF" id="PIRSF001438">
    <property type="entry name" value="4pyrrol_synth_OHMeBilane_synth"/>
    <property type="match status" value="1"/>
</dbReference>
<dbReference type="PRINTS" id="PR00151">
    <property type="entry name" value="PORPHBDMNASE"/>
</dbReference>
<dbReference type="SUPFAM" id="SSF53850">
    <property type="entry name" value="Periplasmic binding protein-like II"/>
    <property type="match status" value="1"/>
</dbReference>
<dbReference type="SUPFAM" id="SSF54782">
    <property type="entry name" value="Porphobilinogen deaminase (hydroxymethylbilane synthase), C-terminal domain"/>
    <property type="match status" value="1"/>
</dbReference>
<keyword id="KW-0627">Porphyrin biosynthesis</keyword>
<keyword id="KW-1185">Reference proteome</keyword>
<keyword id="KW-0808">Transferase</keyword>
<reference key="1">
    <citation type="journal article" date="2002" name="Proc. Natl. Acad. Sci. U.S.A.">
        <title>The complete genome of hyperthermophile Methanopyrus kandleri AV19 and monophyly of archaeal methanogens.</title>
        <authorList>
            <person name="Slesarev A.I."/>
            <person name="Mezhevaya K.V."/>
            <person name="Makarova K.S."/>
            <person name="Polushin N.N."/>
            <person name="Shcherbinina O.V."/>
            <person name="Shakhova V.V."/>
            <person name="Belova G.I."/>
            <person name="Aravind L."/>
            <person name="Natale D.A."/>
            <person name="Rogozin I.B."/>
            <person name="Tatusov R.L."/>
            <person name="Wolf Y.I."/>
            <person name="Stetter K.O."/>
            <person name="Malykh A.G."/>
            <person name="Koonin E.V."/>
            <person name="Kozyavkin S.A."/>
        </authorList>
    </citation>
    <scope>NUCLEOTIDE SEQUENCE [LARGE SCALE GENOMIC DNA]</scope>
    <source>
        <strain>AV19 / DSM 6324 / JCM 9639 / NBRC 100938</strain>
    </source>
</reference>
<accession>Q8TXC8</accession>
<feature type="chain" id="PRO_0000143025" description="Probable porphobilinogen deaminase">
    <location>
        <begin position="1"/>
        <end position="298"/>
    </location>
</feature>
<feature type="modified residue" description="S-(dipyrrolylmethanemethyl)cysteine" evidence="1">
    <location>
        <position position="241"/>
    </location>
</feature>
<comment type="function">
    <text evidence="1">Tetrapolymerization of the monopyrrole PBG into the hydroxymethylbilane pre-uroporphyrinogen in several discrete steps.</text>
</comment>
<comment type="catalytic activity">
    <reaction evidence="1">
        <text>4 porphobilinogen + H2O = hydroxymethylbilane + 4 NH4(+)</text>
        <dbReference type="Rhea" id="RHEA:13185"/>
        <dbReference type="ChEBI" id="CHEBI:15377"/>
        <dbReference type="ChEBI" id="CHEBI:28938"/>
        <dbReference type="ChEBI" id="CHEBI:57845"/>
        <dbReference type="ChEBI" id="CHEBI:58126"/>
        <dbReference type="EC" id="2.5.1.61"/>
    </reaction>
</comment>
<comment type="cofactor">
    <cofactor evidence="1">
        <name>dipyrromethane</name>
        <dbReference type="ChEBI" id="CHEBI:60342"/>
    </cofactor>
    <text evidence="1">Binds 1 dipyrromethane group covalently.</text>
</comment>
<comment type="pathway">
    <text evidence="1">Porphyrin-containing compound metabolism; protoporphyrin-IX biosynthesis; coproporphyrinogen-III from 5-aminolevulinate: step 2/4.</text>
</comment>
<comment type="miscellaneous">
    <text evidence="1">The porphobilinogen subunits are added to the dipyrromethane group.</text>
</comment>
<comment type="similarity">
    <text evidence="1">Belongs to the HMBS family.</text>
</comment>
<comment type="sequence caution" evidence="2">
    <conflict type="erroneous initiation">
        <sequence resource="EMBL-CDS" id="AAM01960"/>
    </conflict>
</comment>
<protein>
    <recommendedName>
        <fullName evidence="1">Probable porphobilinogen deaminase</fullName>
        <shortName evidence="1">PBG</shortName>
        <ecNumber evidence="1">2.5.1.61</ecNumber>
    </recommendedName>
    <alternativeName>
        <fullName evidence="1">Hydroxymethylbilane synthase</fullName>
        <shortName evidence="1">HMBS</shortName>
    </alternativeName>
    <alternativeName>
        <fullName evidence="1">Pre-uroporphyrinogen synthase</fullName>
    </alternativeName>
</protein>
<proteinExistence type="inferred from homology"/>
<gene>
    <name evidence="1" type="primary">hemC</name>
    <name type="ordered locus">MK0746</name>
</gene>